<comment type="subcellular location">
    <subcellularLocation>
        <location evidence="1">Cell membrane</location>
        <topology evidence="1">Multi-pass membrane protein</topology>
    </subcellularLocation>
</comment>
<comment type="similarity">
    <text evidence="1">Belongs to the UPF0391 family.</text>
</comment>
<feature type="chain" id="PRO_5000237025" description="UPF0391 membrane protein YPDSF_3201">
    <location>
        <begin position="1"/>
        <end position="53"/>
    </location>
</feature>
<feature type="transmembrane region" description="Helical" evidence="1">
    <location>
        <begin position="4"/>
        <end position="24"/>
    </location>
</feature>
<feature type="transmembrane region" description="Helical" evidence="1">
    <location>
        <begin position="27"/>
        <end position="47"/>
    </location>
</feature>
<reference key="1">
    <citation type="submission" date="2007-02" db="EMBL/GenBank/DDBJ databases">
        <title>Complete sequence of chromosome of Yersinia pestis Pestoides F.</title>
        <authorList>
            <consortium name="US DOE Joint Genome Institute"/>
            <person name="Copeland A."/>
            <person name="Lucas S."/>
            <person name="Lapidus A."/>
            <person name="Barry K."/>
            <person name="Detter J.C."/>
            <person name="Glavina del Rio T."/>
            <person name="Hammon N."/>
            <person name="Israni S."/>
            <person name="Dalin E."/>
            <person name="Tice H."/>
            <person name="Pitluck S."/>
            <person name="Di Bartolo G."/>
            <person name="Chain P."/>
            <person name="Malfatti S."/>
            <person name="Shin M."/>
            <person name="Vergez L."/>
            <person name="Schmutz J."/>
            <person name="Larimer F."/>
            <person name="Land M."/>
            <person name="Hauser L."/>
            <person name="Worsham P."/>
            <person name="Chu M."/>
            <person name="Bearden S."/>
            <person name="Garcia E."/>
            <person name="Richardson P."/>
        </authorList>
    </citation>
    <scope>NUCLEOTIDE SEQUENCE [LARGE SCALE GENOMIC DNA]</scope>
    <source>
        <strain>Pestoides F</strain>
    </source>
</reference>
<proteinExistence type="inferred from homology"/>
<sequence>MFRWGIIFLIIALIEAALGFGGLAGTAAWAAKVVFVVGIILFLISLFTGRKRL</sequence>
<gene>
    <name type="ordered locus">YPDSF_3201</name>
</gene>
<evidence type="ECO:0000255" key="1">
    <source>
        <dbReference type="HAMAP-Rule" id="MF_01361"/>
    </source>
</evidence>
<keyword id="KW-1003">Cell membrane</keyword>
<keyword id="KW-0472">Membrane</keyword>
<keyword id="KW-0812">Transmembrane</keyword>
<keyword id="KW-1133">Transmembrane helix</keyword>
<accession>A4TQJ7</accession>
<name>Y3201_YERPP</name>
<protein>
    <recommendedName>
        <fullName evidence="1">UPF0391 membrane protein YPDSF_3201</fullName>
    </recommendedName>
</protein>
<organism>
    <name type="scientific">Yersinia pestis (strain Pestoides F)</name>
    <dbReference type="NCBI Taxonomy" id="386656"/>
    <lineage>
        <taxon>Bacteria</taxon>
        <taxon>Pseudomonadati</taxon>
        <taxon>Pseudomonadota</taxon>
        <taxon>Gammaproteobacteria</taxon>
        <taxon>Enterobacterales</taxon>
        <taxon>Yersiniaceae</taxon>
        <taxon>Yersinia</taxon>
    </lineage>
</organism>
<dbReference type="EMBL" id="CP000668">
    <property type="protein sequence ID" value="ABP41559.1"/>
    <property type="molecule type" value="Genomic_DNA"/>
</dbReference>
<dbReference type="RefSeq" id="WP_002209211.1">
    <property type="nucleotide sequence ID" value="NZ_CP009715.1"/>
</dbReference>
<dbReference type="KEGG" id="ypp:YPDSF_3201"/>
<dbReference type="PATRIC" id="fig|386656.14.peg.1146"/>
<dbReference type="GO" id="GO:0005886">
    <property type="term" value="C:plasma membrane"/>
    <property type="evidence" value="ECO:0007669"/>
    <property type="project" value="UniProtKB-SubCell"/>
</dbReference>
<dbReference type="HAMAP" id="MF_01361">
    <property type="entry name" value="UPF0391"/>
    <property type="match status" value="1"/>
</dbReference>
<dbReference type="InterPro" id="IPR009760">
    <property type="entry name" value="DUF1328"/>
</dbReference>
<dbReference type="NCBIfam" id="NF010229">
    <property type="entry name" value="PRK13682.1-4"/>
    <property type="match status" value="1"/>
</dbReference>
<dbReference type="NCBIfam" id="NF010230">
    <property type="entry name" value="PRK13682.1-5"/>
    <property type="match status" value="1"/>
</dbReference>
<dbReference type="Pfam" id="PF07043">
    <property type="entry name" value="DUF1328"/>
    <property type="match status" value="1"/>
</dbReference>
<dbReference type="PIRSF" id="PIRSF036466">
    <property type="entry name" value="UCP036466"/>
    <property type="match status" value="1"/>
</dbReference>